<comment type="function">
    <text>This protein is involved in the determination of copy number in gene replication. It binds to the repA promoter thus inhibiting the synthesis of the mRNA for the initiator protein RepA.</text>
</comment>
<geneLocation type="plasmid">
    <name>IncFII R1-19</name>
    <name>R1 drd-19</name>
</geneLocation>
<reference key="1">
    <citation type="journal article" date="1981" name="Mol. Gen. Genet.">
        <title>The nucleotide sequence of the replication control region of the resistance plasmid R1drd-19.</title>
        <authorList>
            <person name="Stougaard P."/>
            <person name="Molin S."/>
            <person name="Nordstroem K."/>
            <person name="Hansen F.G."/>
        </authorList>
    </citation>
    <scope>NUCLEOTIDE SEQUENCE [GENOMIC DNA]</scope>
</reference>
<proteinExistence type="predicted"/>
<feature type="chain" id="PRO_0000068292" description="Replication regulatory protein repA2">
    <location>
        <begin position="1"/>
        <end position="86"/>
    </location>
</feature>
<feature type="region of interest" description="Disordered" evidence="1">
    <location>
        <begin position="1"/>
        <end position="31"/>
    </location>
</feature>
<feature type="compositionally biased region" description="Polar residues" evidence="1">
    <location>
        <begin position="1"/>
        <end position="14"/>
    </location>
</feature>
<protein>
    <recommendedName>
        <fullName>Replication regulatory protein repA2</fullName>
    </recommendedName>
    <alternativeName>
        <fullName>Protein CopB</fullName>
    </alternativeName>
</protein>
<dbReference type="PIR" id="A04484">
    <property type="entry name" value="WMEC5R"/>
</dbReference>
<dbReference type="PIR" id="S11883">
    <property type="entry name" value="S11883"/>
</dbReference>
<dbReference type="RefSeq" id="WP_000083819.1">
    <property type="nucleotide sequence ID" value="NZ_WXYX01000004.1"/>
</dbReference>
<dbReference type="RefSeq" id="YP_003829166.1">
    <property type="nucleotide sequence ID" value="NC_014384.1"/>
</dbReference>
<dbReference type="RefSeq" id="YP_003829326.1">
    <property type="nucleotide sequence ID" value="NC_014385.1"/>
</dbReference>
<dbReference type="RefSeq" id="YP_008997919.1">
    <property type="nucleotide sequence ID" value="NC_023315.1"/>
</dbReference>
<dbReference type="RefSeq" id="YP_443948.1">
    <property type="nucleotide sequence ID" value="NC_007675.1"/>
</dbReference>
<dbReference type="RefSeq" id="YP_788101.1">
    <property type="nucleotide sequence ID" value="NC_008460.1"/>
</dbReference>
<dbReference type="SMR" id="P62536"/>
<dbReference type="GO" id="GO:0003677">
    <property type="term" value="F:DNA binding"/>
    <property type="evidence" value="ECO:0007669"/>
    <property type="project" value="UniProtKB-KW"/>
</dbReference>
<dbReference type="GO" id="GO:0006276">
    <property type="term" value="P:plasmid maintenance"/>
    <property type="evidence" value="ECO:0007669"/>
    <property type="project" value="UniProtKB-KW"/>
</dbReference>
<dbReference type="InterPro" id="IPR019661">
    <property type="entry name" value="RepA2"/>
</dbReference>
<dbReference type="NCBIfam" id="NF010256">
    <property type="entry name" value="PRK13702.1"/>
    <property type="match status" value="1"/>
</dbReference>
<dbReference type="Pfam" id="PF10723">
    <property type="entry name" value="RepB-RCR_reg"/>
    <property type="match status" value="1"/>
</dbReference>
<evidence type="ECO:0000256" key="1">
    <source>
        <dbReference type="SAM" id="MobiDB-lite"/>
    </source>
</evidence>
<name>COPB3_ECOLX</name>
<keyword id="KW-0238">DNA-binding</keyword>
<keyword id="KW-0614">Plasmid</keyword>
<keyword id="KW-0615">Plasmid copy control</keyword>
<keyword id="KW-0678">Repressor</keyword>
<keyword id="KW-0804">Transcription</keyword>
<keyword id="KW-0805">Transcription regulation</keyword>
<gene>
    <name type="primary">repA2</name>
    <name type="synonym">copB</name>
    <name type="synonym">repB</name>
</gene>
<accession>P62536</accession>
<accession>P03855</accession>
<sequence length="86" mass="10038">MSQTENAVTSSLSQKRFVRRGKPMTDSEKQMAAVARKRLTHKEIKVFVKNPLKDLMVEYCEREGITQAQFVEKIIKDELQRLDILK</sequence>
<organism>
    <name type="scientific">Escherichia coli</name>
    <dbReference type="NCBI Taxonomy" id="562"/>
    <lineage>
        <taxon>Bacteria</taxon>
        <taxon>Pseudomonadati</taxon>
        <taxon>Pseudomonadota</taxon>
        <taxon>Gammaproteobacteria</taxon>
        <taxon>Enterobacterales</taxon>
        <taxon>Enterobacteriaceae</taxon>
        <taxon>Escherichia</taxon>
    </lineage>
</organism>